<dbReference type="EC" id="3.2.2.23" evidence="2"/>
<dbReference type="EC" id="4.2.99.18" evidence="2"/>
<dbReference type="EMBL" id="CP000269">
    <property type="protein sequence ID" value="ABR88402.1"/>
    <property type="molecule type" value="Genomic_DNA"/>
</dbReference>
<dbReference type="RefSeq" id="WP_012080967.1">
    <property type="nucleotide sequence ID" value="NC_009659.1"/>
</dbReference>
<dbReference type="SMR" id="A6T2R7"/>
<dbReference type="STRING" id="375286.mma_3124"/>
<dbReference type="KEGG" id="mms:mma_3124"/>
<dbReference type="eggNOG" id="COG0266">
    <property type="taxonomic scope" value="Bacteria"/>
</dbReference>
<dbReference type="HOGENOM" id="CLU_038423_1_1_4"/>
<dbReference type="OrthoDB" id="9800855at2"/>
<dbReference type="Proteomes" id="UP000006388">
    <property type="component" value="Chromosome"/>
</dbReference>
<dbReference type="GO" id="GO:0034039">
    <property type="term" value="F:8-oxo-7,8-dihydroguanine DNA N-glycosylase activity"/>
    <property type="evidence" value="ECO:0007669"/>
    <property type="project" value="TreeGrafter"/>
</dbReference>
<dbReference type="GO" id="GO:0140078">
    <property type="term" value="F:class I DNA-(apurinic or apyrimidinic site) endonuclease activity"/>
    <property type="evidence" value="ECO:0007669"/>
    <property type="project" value="UniProtKB-EC"/>
</dbReference>
<dbReference type="GO" id="GO:0003684">
    <property type="term" value="F:damaged DNA binding"/>
    <property type="evidence" value="ECO:0007669"/>
    <property type="project" value="InterPro"/>
</dbReference>
<dbReference type="GO" id="GO:0008270">
    <property type="term" value="F:zinc ion binding"/>
    <property type="evidence" value="ECO:0007669"/>
    <property type="project" value="UniProtKB-UniRule"/>
</dbReference>
<dbReference type="GO" id="GO:0006284">
    <property type="term" value="P:base-excision repair"/>
    <property type="evidence" value="ECO:0007669"/>
    <property type="project" value="InterPro"/>
</dbReference>
<dbReference type="CDD" id="cd08966">
    <property type="entry name" value="EcFpg-like_N"/>
    <property type="match status" value="1"/>
</dbReference>
<dbReference type="FunFam" id="1.10.8.50:FF:000003">
    <property type="entry name" value="Formamidopyrimidine-DNA glycosylase"/>
    <property type="match status" value="1"/>
</dbReference>
<dbReference type="Gene3D" id="1.10.8.50">
    <property type="match status" value="1"/>
</dbReference>
<dbReference type="Gene3D" id="3.20.190.10">
    <property type="entry name" value="MutM-like, N-terminal"/>
    <property type="match status" value="1"/>
</dbReference>
<dbReference type="HAMAP" id="MF_00103">
    <property type="entry name" value="Fapy_DNA_glycosyl"/>
    <property type="match status" value="1"/>
</dbReference>
<dbReference type="InterPro" id="IPR015886">
    <property type="entry name" value="DNA_glyclase/AP_lyase_DNA-bd"/>
</dbReference>
<dbReference type="InterPro" id="IPR015887">
    <property type="entry name" value="DNA_glyclase_Znf_dom_DNA_BS"/>
</dbReference>
<dbReference type="InterPro" id="IPR020629">
    <property type="entry name" value="Formamido-pyr_DNA_Glyclase"/>
</dbReference>
<dbReference type="InterPro" id="IPR012319">
    <property type="entry name" value="FPG_cat"/>
</dbReference>
<dbReference type="InterPro" id="IPR035937">
    <property type="entry name" value="MutM-like_N-ter"/>
</dbReference>
<dbReference type="InterPro" id="IPR010979">
    <property type="entry name" value="Ribosomal_uS13-like_H2TH"/>
</dbReference>
<dbReference type="InterPro" id="IPR000214">
    <property type="entry name" value="Znf_DNA_glyclase/AP_lyase"/>
</dbReference>
<dbReference type="InterPro" id="IPR010663">
    <property type="entry name" value="Znf_FPG/IleRS"/>
</dbReference>
<dbReference type="NCBIfam" id="TIGR00577">
    <property type="entry name" value="fpg"/>
    <property type="match status" value="1"/>
</dbReference>
<dbReference type="NCBIfam" id="NF002211">
    <property type="entry name" value="PRK01103.1"/>
    <property type="match status" value="1"/>
</dbReference>
<dbReference type="PANTHER" id="PTHR22993">
    <property type="entry name" value="FORMAMIDOPYRIMIDINE-DNA GLYCOSYLASE"/>
    <property type="match status" value="1"/>
</dbReference>
<dbReference type="PANTHER" id="PTHR22993:SF9">
    <property type="entry name" value="FORMAMIDOPYRIMIDINE-DNA GLYCOSYLASE"/>
    <property type="match status" value="1"/>
</dbReference>
<dbReference type="Pfam" id="PF01149">
    <property type="entry name" value="Fapy_DNA_glyco"/>
    <property type="match status" value="1"/>
</dbReference>
<dbReference type="Pfam" id="PF06831">
    <property type="entry name" value="H2TH"/>
    <property type="match status" value="1"/>
</dbReference>
<dbReference type="Pfam" id="PF06827">
    <property type="entry name" value="zf-FPG_IleRS"/>
    <property type="match status" value="1"/>
</dbReference>
<dbReference type="SMART" id="SM00898">
    <property type="entry name" value="Fapy_DNA_glyco"/>
    <property type="match status" value="1"/>
</dbReference>
<dbReference type="SMART" id="SM01232">
    <property type="entry name" value="H2TH"/>
    <property type="match status" value="1"/>
</dbReference>
<dbReference type="SUPFAM" id="SSF57716">
    <property type="entry name" value="Glucocorticoid receptor-like (DNA-binding domain)"/>
    <property type="match status" value="1"/>
</dbReference>
<dbReference type="SUPFAM" id="SSF81624">
    <property type="entry name" value="N-terminal domain of MutM-like DNA repair proteins"/>
    <property type="match status" value="1"/>
</dbReference>
<dbReference type="SUPFAM" id="SSF46946">
    <property type="entry name" value="S13-like H2TH domain"/>
    <property type="match status" value="1"/>
</dbReference>
<dbReference type="PROSITE" id="PS51068">
    <property type="entry name" value="FPG_CAT"/>
    <property type="match status" value="1"/>
</dbReference>
<dbReference type="PROSITE" id="PS01242">
    <property type="entry name" value="ZF_FPG_1"/>
    <property type="match status" value="1"/>
</dbReference>
<dbReference type="PROSITE" id="PS51066">
    <property type="entry name" value="ZF_FPG_2"/>
    <property type="match status" value="1"/>
</dbReference>
<accession>A6T2R7</accession>
<gene>
    <name evidence="2" type="primary">mutM</name>
    <name evidence="2" type="synonym">fpg</name>
    <name type="ordered locus">mma_3124</name>
</gene>
<keyword id="KW-0227">DNA damage</keyword>
<keyword id="KW-0234">DNA repair</keyword>
<keyword id="KW-0238">DNA-binding</keyword>
<keyword id="KW-0326">Glycosidase</keyword>
<keyword id="KW-0378">Hydrolase</keyword>
<keyword id="KW-0456">Lyase</keyword>
<keyword id="KW-0479">Metal-binding</keyword>
<keyword id="KW-0511">Multifunctional enzyme</keyword>
<keyword id="KW-0862">Zinc</keyword>
<keyword id="KW-0863">Zinc-finger</keyword>
<reference key="1">
    <citation type="journal article" date="2007" name="PLoS Genet.">
        <title>Genome analysis of Minibacterium massiliensis highlights the convergent evolution of water-living bacteria.</title>
        <authorList>
            <person name="Audic S."/>
            <person name="Robert C."/>
            <person name="Campagna B."/>
            <person name="Parinello H."/>
            <person name="Claverie J.-M."/>
            <person name="Raoult D."/>
            <person name="Drancourt M."/>
        </authorList>
    </citation>
    <scope>NUCLEOTIDE SEQUENCE [LARGE SCALE GENOMIC DNA]</scope>
    <source>
        <strain>Marseille</strain>
    </source>
</reference>
<organism>
    <name type="scientific">Janthinobacterium sp. (strain Marseille)</name>
    <name type="common">Minibacterium massiliensis</name>
    <dbReference type="NCBI Taxonomy" id="375286"/>
    <lineage>
        <taxon>Bacteria</taxon>
        <taxon>Pseudomonadati</taxon>
        <taxon>Pseudomonadota</taxon>
        <taxon>Betaproteobacteria</taxon>
        <taxon>Burkholderiales</taxon>
        <taxon>Oxalobacteraceae</taxon>
        <taxon>Janthinobacterium</taxon>
    </lineage>
</organism>
<comment type="function">
    <text evidence="2">Involved in base excision repair of DNA damaged by oxidation or by mutagenic agents. Acts as a DNA glycosylase that recognizes and removes damaged bases. Has a preference for oxidized purines, such as 7,8-dihydro-8-oxoguanine (8-oxoG). Has AP (apurinic/apyrimidinic) lyase activity and introduces nicks in the DNA strand. Cleaves the DNA backbone by beta-delta elimination to generate a single-strand break at the site of the removed base with both 3'- and 5'-phosphates.</text>
</comment>
<comment type="catalytic activity">
    <reaction evidence="2">
        <text>Hydrolysis of DNA containing ring-opened 7-methylguanine residues, releasing 2,6-diamino-4-hydroxy-5-(N-methyl)formamidopyrimidine.</text>
        <dbReference type="EC" id="3.2.2.23"/>
    </reaction>
</comment>
<comment type="catalytic activity">
    <reaction evidence="2">
        <text>2'-deoxyribonucleotide-(2'-deoxyribose 5'-phosphate)-2'-deoxyribonucleotide-DNA = a 3'-end 2'-deoxyribonucleotide-(2,3-dehydro-2,3-deoxyribose 5'-phosphate)-DNA + a 5'-end 5'-phospho-2'-deoxyribonucleoside-DNA + H(+)</text>
        <dbReference type="Rhea" id="RHEA:66592"/>
        <dbReference type="Rhea" id="RHEA-COMP:13180"/>
        <dbReference type="Rhea" id="RHEA-COMP:16897"/>
        <dbReference type="Rhea" id="RHEA-COMP:17067"/>
        <dbReference type="ChEBI" id="CHEBI:15378"/>
        <dbReference type="ChEBI" id="CHEBI:136412"/>
        <dbReference type="ChEBI" id="CHEBI:157695"/>
        <dbReference type="ChEBI" id="CHEBI:167181"/>
        <dbReference type="EC" id="4.2.99.18"/>
    </reaction>
</comment>
<comment type="cofactor">
    <cofactor evidence="2">
        <name>Zn(2+)</name>
        <dbReference type="ChEBI" id="CHEBI:29105"/>
    </cofactor>
    <text evidence="2">Binds 1 zinc ion per subunit.</text>
</comment>
<comment type="subunit">
    <text evidence="2">Monomer.</text>
</comment>
<comment type="similarity">
    <text evidence="2">Belongs to the FPG family.</text>
</comment>
<feature type="initiator methionine" description="Removed" evidence="1">
    <location>
        <position position="1"/>
    </location>
</feature>
<feature type="chain" id="PRO_1000008705" description="Formamidopyrimidine-DNA glycosylase">
    <location>
        <begin position="2"/>
        <end position="273"/>
    </location>
</feature>
<feature type="zinc finger region" description="FPG-type" evidence="2">
    <location>
        <begin position="239"/>
        <end position="273"/>
    </location>
</feature>
<feature type="active site" description="Schiff-base intermediate with DNA" evidence="2">
    <location>
        <position position="2"/>
    </location>
</feature>
<feature type="active site" description="Proton donor" evidence="2">
    <location>
        <position position="3"/>
    </location>
</feature>
<feature type="active site" description="Proton donor; for beta-elimination activity" evidence="2">
    <location>
        <position position="58"/>
    </location>
</feature>
<feature type="active site" description="Proton donor; for delta-elimination activity" evidence="2">
    <location>
        <position position="263"/>
    </location>
</feature>
<feature type="binding site" evidence="2">
    <location>
        <position position="91"/>
    </location>
    <ligand>
        <name>DNA</name>
        <dbReference type="ChEBI" id="CHEBI:16991"/>
    </ligand>
</feature>
<feature type="binding site" evidence="2">
    <location>
        <position position="109"/>
    </location>
    <ligand>
        <name>DNA</name>
        <dbReference type="ChEBI" id="CHEBI:16991"/>
    </ligand>
</feature>
<feature type="binding site" evidence="2">
    <location>
        <position position="154"/>
    </location>
    <ligand>
        <name>DNA</name>
        <dbReference type="ChEBI" id="CHEBI:16991"/>
    </ligand>
</feature>
<name>FPG_JANMA</name>
<evidence type="ECO:0000250" key="1"/>
<evidence type="ECO:0000255" key="2">
    <source>
        <dbReference type="HAMAP-Rule" id="MF_00103"/>
    </source>
</evidence>
<sequence>MPELPEVEVTRRGVAPHLEGQVITGVALRHTGLRWPFPATLSQTLAGRTVRSTGRRGKYLLIHFDHGTLIIHLGMSGHLRILPSDVPPKKHDHFDLEIGPQLLRLTDPRRFGAVLWHAAEDGSIENHLLLRTLGVEPLEAAFSAQWLYQQTRNRSSAIKQVLLAGDIVVGVGNIYASESLFQARINPKTPAHRIGLARYERLAEAIRQILAAAIEQGGSTLKDFIGVNGQSGYFQQNYFCYARTGEPCRICKTPIRQIVQGQRSTFYCPNCQK</sequence>
<protein>
    <recommendedName>
        <fullName evidence="2">Formamidopyrimidine-DNA glycosylase</fullName>
        <shortName evidence="2">Fapy-DNA glycosylase</shortName>
        <ecNumber evidence="2">3.2.2.23</ecNumber>
    </recommendedName>
    <alternativeName>
        <fullName evidence="2">DNA-(apurinic or apyrimidinic site) lyase MutM</fullName>
        <shortName evidence="2">AP lyase MutM</shortName>
        <ecNumber evidence="2">4.2.99.18</ecNumber>
    </alternativeName>
</protein>
<proteinExistence type="inferred from homology"/>